<accession>Q4WJS4</accession>
<evidence type="ECO:0000250" key="1"/>
<evidence type="ECO:0000255" key="2"/>
<evidence type="ECO:0000255" key="3">
    <source>
        <dbReference type="PROSITE-ProRule" id="PRU01161"/>
    </source>
</evidence>
<evidence type="ECO:0000256" key="4">
    <source>
        <dbReference type="SAM" id="MobiDB-lite"/>
    </source>
</evidence>
<evidence type="ECO:0000305" key="5"/>
<proteinExistence type="inferred from homology"/>
<keyword id="KW-0378">Hydrolase</keyword>
<keyword id="KW-0442">Lipid degradation</keyword>
<keyword id="KW-0443">Lipid metabolism</keyword>
<keyword id="KW-0472">Membrane</keyword>
<keyword id="KW-1185">Reference proteome</keyword>
<keyword id="KW-0812">Transmembrane</keyword>
<keyword id="KW-1133">Transmembrane helix</keyword>
<dbReference type="EC" id="3.1.1.-"/>
<dbReference type="EMBL" id="AAHF01000007">
    <property type="protein sequence ID" value="EAL88208.1"/>
    <property type="molecule type" value="Genomic_DNA"/>
</dbReference>
<dbReference type="RefSeq" id="XP_750246.1">
    <property type="nucleotide sequence ID" value="XM_745153.1"/>
</dbReference>
<dbReference type="STRING" id="330879.Q4WJS4"/>
<dbReference type="EnsemblFungi" id="EAL88208">
    <property type="protein sequence ID" value="EAL88208"/>
    <property type="gene ID" value="AFUA_1G04970"/>
</dbReference>
<dbReference type="GeneID" id="3507440"/>
<dbReference type="KEGG" id="afm:AFUA_1G04970"/>
<dbReference type="eggNOG" id="KOG2214">
    <property type="taxonomic scope" value="Eukaryota"/>
</dbReference>
<dbReference type="HOGENOM" id="CLU_009031_2_2_1"/>
<dbReference type="InParanoid" id="Q4WJS4"/>
<dbReference type="OMA" id="CSWFTRG"/>
<dbReference type="OrthoDB" id="15478at2759"/>
<dbReference type="Proteomes" id="UP000002530">
    <property type="component" value="Chromosome 1"/>
</dbReference>
<dbReference type="GO" id="GO:0005811">
    <property type="term" value="C:lipid droplet"/>
    <property type="evidence" value="ECO:0007669"/>
    <property type="project" value="EnsemblFungi"/>
</dbReference>
<dbReference type="GO" id="GO:0016020">
    <property type="term" value="C:membrane"/>
    <property type="evidence" value="ECO:0007669"/>
    <property type="project" value="UniProtKB-SubCell"/>
</dbReference>
<dbReference type="GO" id="GO:0004806">
    <property type="term" value="F:triacylglycerol lipase activity"/>
    <property type="evidence" value="ECO:0007669"/>
    <property type="project" value="EnsemblFungi"/>
</dbReference>
<dbReference type="GO" id="GO:1990748">
    <property type="term" value="P:cellular detoxification"/>
    <property type="evidence" value="ECO:0007669"/>
    <property type="project" value="EnsemblFungi"/>
</dbReference>
<dbReference type="GO" id="GO:0016042">
    <property type="term" value="P:lipid catabolic process"/>
    <property type="evidence" value="ECO:0007669"/>
    <property type="project" value="UniProtKB-KW"/>
</dbReference>
<dbReference type="GO" id="GO:0006642">
    <property type="term" value="P:triglyceride mobilization"/>
    <property type="evidence" value="ECO:0007669"/>
    <property type="project" value="EnsemblFungi"/>
</dbReference>
<dbReference type="CDD" id="cd07232">
    <property type="entry name" value="Pat_PLPL"/>
    <property type="match status" value="1"/>
</dbReference>
<dbReference type="Gene3D" id="3.40.1090.10">
    <property type="entry name" value="Cytosolic phospholipase A2 catalytic domain"/>
    <property type="match status" value="2"/>
</dbReference>
<dbReference type="InterPro" id="IPR016035">
    <property type="entry name" value="Acyl_Trfase/lysoPLipase"/>
</dbReference>
<dbReference type="InterPro" id="IPR050301">
    <property type="entry name" value="NTE"/>
</dbReference>
<dbReference type="InterPro" id="IPR002641">
    <property type="entry name" value="PNPLA_dom"/>
</dbReference>
<dbReference type="InterPro" id="IPR021771">
    <property type="entry name" value="Triacylglycerol_lipase_N"/>
</dbReference>
<dbReference type="PANTHER" id="PTHR14226">
    <property type="entry name" value="NEUROPATHY TARGET ESTERASE/SWISS CHEESE D.MELANOGASTER"/>
    <property type="match status" value="1"/>
</dbReference>
<dbReference type="PANTHER" id="PTHR14226:SF66">
    <property type="entry name" value="TRIACYLGLYCEROL LIPASE PTL2"/>
    <property type="match status" value="1"/>
</dbReference>
<dbReference type="Pfam" id="PF11815">
    <property type="entry name" value="DUF3336"/>
    <property type="match status" value="1"/>
</dbReference>
<dbReference type="Pfam" id="PF01734">
    <property type="entry name" value="Patatin"/>
    <property type="match status" value="1"/>
</dbReference>
<dbReference type="SUPFAM" id="SSF52151">
    <property type="entry name" value="FabD/lysophospholipase-like"/>
    <property type="match status" value="1"/>
</dbReference>
<dbReference type="PROSITE" id="PS51635">
    <property type="entry name" value="PNPLA"/>
    <property type="match status" value="1"/>
</dbReference>
<sequence length="712" mass="81948">MTSDEKSATRDIYDPNTLPDYDREFIEPDDLRQFEKALNAPEAAPLVALNDWRPVNQRVRKSRRTKPRRSKDETREGVLYTVLKWPFLFTVFAWITVLGFAYTLTRLYIFLYEQFVTWRGKREQLRRELSMQTNYQDWLKAAQALDTYLGNLKWKETDEYAYYDHLTINKVVAQLKQTRKAAEMEMQNGRPGLSDPPAVEELCFLLEACVKNNFAGVENPRLYSETYSGTKDLVQEYIDEVHSCIRLVLDSKQISNEDKYQFFKHLDTNFGRTALCLSGGATFAYYHFGVIRALLDNDVLPEIITGTSGGALVAALVATRTDEELKQLLVPALAHRIRACHEGFTTWVRRWWRTGARFDTLDWARQCSWFCRGSTTFREAYERTGRILNVSCVPSDPHSPTILANYLTSPDCVIWSAVLASAAVPGILNPVVLMTKKRDGTLAPYSFGHKWKDGSLRTDIPIKALNLHFNVNFTIVSQVNPHINLFFFNSRGSVGRPVTHRKGRGWRGGFLGSAIEQYIKLDMNKWLRVLRHLELLPRPLGQDWSEIWLQKFSGTITIWPKSIPSDFYHILSDPSPERLARMLHVGKQSAFPKIQFIKNRLKIENAIMQGLQQCSSGGGRVMSPILSRRRQDRAQEHADRMVERLDQSFPERQSDYKDESHYAEVSDSLSATSSRPHTPDARRSSMFEEMRRQSAVFFDDPDMYADEDAVTT</sequence>
<comment type="function">
    <text evidence="1">Probable lipid hydrolase.</text>
</comment>
<comment type="subcellular location">
    <subcellularLocation>
        <location evidence="5">Membrane</location>
        <topology evidence="5">Single-pass membrane protein</topology>
    </subcellularLocation>
</comment>
<comment type="similarity">
    <text evidence="5">Belongs to the PLPL family.</text>
</comment>
<protein>
    <recommendedName>
        <fullName>Patatin-like phospholipase domain-containing protein AFUA_1G04970</fullName>
        <ecNumber>3.1.1.-</ecNumber>
    </recommendedName>
</protein>
<reference key="1">
    <citation type="journal article" date="2005" name="Nature">
        <title>Genomic sequence of the pathogenic and allergenic filamentous fungus Aspergillus fumigatus.</title>
        <authorList>
            <person name="Nierman W.C."/>
            <person name="Pain A."/>
            <person name="Anderson M.J."/>
            <person name="Wortman J.R."/>
            <person name="Kim H.S."/>
            <person name="Arroyo J."/>
            <person name="Berriman M."/>
            <person name="Abe K."/>
            <person name="Archer D.B."/>
            <person name="Bermejo C."/>
            <person name="Bennett J.W."/>
            <person name="Bowyer P."/>
            <person name="Chen D."/>
            <person name="Collins M."/>
            <person name="Coulsen R."/>
            <person name="Davies R."/>
            <person name="Dyer P.S."/>
            <person name="Farman M.L."/>
            <person name="Fedorova N."/>
            <person name="Fedorova N.D."/>
            <person name="Feldblyum T.V."/>
            <person name="Fischer R."/>
            <person name="Fosker N."/>
            <person name="Fraser A."/>
            <person name="Garcia J.L."/>
            <person name="Garcia M.J."/>
            <person name="Goble A."/>
            <person name="Goldman G.H."/>
            <person name="Gomi K."/>
            <person name="Griffith-Jones S."/>
            <person name="Gwilliam R."/>
            <person name="Haas B.J."/>
            <person name="Haas H."/>
            <person name="Harris D.E."/>
            <person name="Horiuchi H."/>
            <person name="Huang J."/>
            <person name="Humphray S."/>
            <person name="Jimenez J."/>
            <person name="Keller N."/>
            <person name="Khouri H."/>
            <person name="Kitamoto K."/>
            <person name="Kobayashi T."/>
            <person name="Konzack S."/>
            <person name="Kulkarni R."/>
            <person name="Kumagai T."/>
            <person name="Lafton A."/>
            <person name="Latge J.-P."/>
            <person name="Li W."/>
            <person name="Lord A."/>
            <person name="Lu C."/>
            <person name="Majoros W.H."/>
            <person name="May G.S."/>
            <person name="Miller B.L."/>
            <person name="Mohamoud Y."/>
            <person name="Molina M."/>
            <person name="Monod M."/>
            <person name="Mouyna I."/>
            <person name="Mulligan S."/>
            <person name="Murphy L.D."/>
            <person name="O'Neil S."/>
            <person name="Paulsen I."/>
            <person name="Penalva M.A."/>
            <person name="Pertea M."/>
            <person name="Price C."/>
            <person name="Pritchard B.L."/>
            <person name="Quail M.A."/>
            <person name="Rabbinowitsch E."/>
            <person name="Rawlins N."/>
            <person name="Rajandream M.A."/>
            <person name="Reichard U."/>
            <person name="Renauld H."/>
            <person name="Robson G.D."/>
            <person name="Rodriguez de Cordoba S."/>
            <person name="Rodriguez-Pena J.M."/>
            <person name="Ronning C.M."/>
            <person name="Rutter S."/>
            <person name="Salzberg S.L."/>
            <person name="Sanchez M."/>
            <person name="Sanchez-Ferrero J.C."/>
            <person name="Saunders D."/>
            <person name="Seeger K."/>
            <person name="Squares R."/>
            <person name="Squares S."/>
            <person name="Takeuchi M."/>
            <person name="Tekaia F."/>
            <person name="Turner G."/>
            <person name="Vazquez de Aldana C.R."/>
            <person name="Weidman J."/>
            <person name="White O."/>
            <person name="Woodward J.R."/>
            <person name="Yu J.-H."/>
            <person name="Fraser C.M."/>
            <person name="Galagan J.E."/>
            <person name="Asai K."/>
            <person name="Machida M."/>
            <person name="Hall N."/>
            <person name="Barrell B.G."/>
            <person name="Denning D.W."/>
        </authorList>
    </citation>
    <scope>NUCLEOTIDE SEQUENCE [LARGE SCALE GENOMIC DNA]</scope>
    <source>
        <strain>ATCC MYA-4609 / CBS 101355 / FGSC A1100 / Af293</strain>
    </source>
</reference>
<name>PLPL_ASPFU</name>
<organism>
    <name type="scientific">Aspergillus fumigatus (strain ATCC MYA-4609 / CBS 101355 / FGSC A1100 / Af293)</name>
    <name type="common">Neosartorya fumigata</name>
    <dbReference type="NCBI Taxonomy" id="330879"/>
    <lineage>
        <taxon>Eukaryota</taxon>
        <taxon>Fungi</taxon>
        <taxon>Dikarya</taxon>
        <taxon>Ascomycota</taxon>
        <taxon>Pezizomycotina</taxon>
        <taxon>Eurotiomycetes</taxon>
        <taxon>Eurotiomycetidae</taxon>
        <taxon>Eurotiales</taxon>
        <taxon>Aspergillaceae</taxon>
        <taxon>Aspergillus</taxon>
        <taxon>Aspergillus subgen. Fumigati</taxon>
    </lineage>
</organism>
<gene>
    <name type="ORF">AFUA_1G04970</name>
</gene>
<feature type="chain" id="PRO_0000295550" description="Patatin-like phospholipase domain-containing protein AFUA_1G04970">
    <location>
        <begin position="1"/>
        <end position="712"/>
    </location>
</feature>
<feature type="transmembrane region" description="Helical" evidence="2">
    <location>
        <begin position="85"/>
        <end position="105"/>
    </location>
</feature>
<feature type="domain" description="PNPLA" evidence="3">
    <location>
        <begin position="275"/>
        <end position="466"/>
    </location>
</feature>
<feature type="region of interest" description="Disordered" evidence="4">
    <location>
        <begin position="1"/>
        <end position="20"/>
    </location>
</feature>
<feature type="region of interest" description="Disordered" evidence="4">
    <location>
        <begin position="628"/>
        <end position="688"/>
    </location>
</feature>
<feature type="short sequence motif" description="GXSXG" evidence="3">
    <location>
        <begin position="306"/>
        <end position="310"/>
    </location>
</feature>
<feature type="compositionally biased region" description="Basic and acidic residues" evidence="4">
    <location>
        <begin position="1"/>
        <end position="13"/>
    </location>
</feature>
<feature type="compositionally biased region" description="Basic and acidic residues" evidence="4">
    <location>
        <begin position="632"/>
        <end position="646"/>
    </location>
</feature>
<feature type="compositionally biased region" description="Basic and acidic residues" evidence="4">
    <location>
        <begin position="652"/>
        <end position="664"/>
    </location>
</feature>
<feature type="compositionally biased region" description="Polar residues" evidence="4">
    <location>
        <begin position="667"/>
        <end position="676"/>
    </location>
</feature>
<feature type="compositionally biased region" description="Basic and acidic residues" evidence="4">
    <location>
        <begin position="677"/>
        <end position="688"/>
    </location>
</feature>
<feature type="active site" description="Nucleophile" evidence="3">
    <location>
        <position position="308"/>
    </location>
</feature>
<feature type="active site" description="Proton acceptor" evidence="3">
    <location>
        <position position="453"/>
    </location>
</feature>